<comment type="function">
    <text evidence="1">Catalyzes the attachment of threonine to tRNA(Thr) in a two-step reaction: L-threonine is first activated by ATP to form Thr-AMP and then transferred to the acceptor end of tRNA(Thr). Also edits incorrectly charged L-seryl-tRNA(Thr).</text>
</comment>
<comment type="catalytic activity">
    <reaction evidence="1">
        <text>tRNA(Thr) + L-threonine + ATP = L-threonyl-tRNA(Thr) + AMP + diphosphate + H(+)</text>
        <dbReference type="Rhea" id="RHEA:24624"/>
        <dbReference type="Rhea" id="RHEA-COMP:9670"/>
        <dbReference type="Rhea" id="RHEA-COMP:9704"/>
        <dbReference type="ChEBI" id="CHEBI:15378"/>
        <dbReference type="ChEBI" id="CHEBI:30616"/>
        <dbReference type="ChEBI" id="CHEBI:33019"/>
        <dbReference type="ChEBI" id="CHEBI:57926"/>
        <dbReference type="ChEBI" id="CHEBI:78442"/>
        <dbReference type="ChEBI" id="CHEBI:78534"/>
        <dbReference type="ChEBI" id="CHEBI:456215"/>
        <dbReference type="EC" id="6.1.1.3"/>
    </reaction>
</comment>
<comment type="cofactor">
    <cofactor evidence="1">
        <name>Zn(2+)</name>
        <dbReference type="ChEBI" id="CHEBI:29105"/>
    </cofactor>
    <text evidence="1">Binds 1 zinc ion per subunit.</text>
</comment>
<comment type="subunit">
    <text evidence="1">Homodimer.</text>
</comment>
<comment type="subcellular location">
    <subcellularLocation>
        <location evidence="1">Cytoplasm</location>
    </subcellularLocation>
</comment>
<comment type="similarity">
    <text evidence="1">Belongs to the class-II aminoacyl-tRNA synthetase family.</text>
</comment>
<name>SYT_LEGPC</name>
<proteinExistence type="inferred from homology"/>
<feature type="chain" id="PRO_1000020415" description="Threonine--tRNA ligase">
    <location>
        <begin position="1"/>
        <end position="637"/>
    </location>
</feature>
<feature type="domain" description="TGS" evidence="2">
    <location>
        <begin position="1"/>
        <end position="61"/>
    </location>
</feature>
<feature type="region of interest" description="Catalytic" evidence="1">
    <location>
        <begin position="242"/>
        <end position="533"/>
    </location>
</feature>
<feature type="binding site" evidence="1">
    <location>
        <position position="333"/>
    </location>
    <ligand>
        <name>Zn(2+)</name>
        <dbReference type="ChEBI" id="CHEBI:29105"/>
    </ligand>
</feature>
<feature type="binding site" evidence="1">
    <location>
        <position position="384"/>
    </location>
    <ligand>
        <name>Zn(2+)</name>
        <dbReference type="ChEBI" id="CHEBI:29105"/>
    </ligand>
</feature>
<feature type="binding site" evidence="1">
    <location>
        <position position="510"/>
    </location>
    <ligand>
        <name>Zn(2+)</name>
        <dbReference type="ChEBI" id="CHEBI:29105"/>
    </ligand>
</feature>
<dbReference type="EC" id="6.1.1.3" evidence="1"/>
<dbReference type="EMBL" id="CP000675">
    <property type="protein sequence ID" value="ABQ54409.1"/>
    <property type="molecule type" value="Genomic_DNA"/>
</dbReference>
<dbReference type="RefSeq" id="WP_011947619.1">
    <property type="nucleotide sequence ID" value="NC_009494.2"/>
</dbReference>
<dbReference type="SMR" id="A5IAK9"/>
<dbReference type="KEGG" id="lpc:LPC_0420"/>
<dbReference type="HOGENOM" id="CLU_008554_0_1_6"/>
<dbReference type="GO" id="GO:0005737">
    <property type="term" value="C:cytoplasm"/>
    <property type="evidence" value="ECO:0007669"/>
    <property type="project" value="UniProtKB-SubCell"/>
</dbReference>
<dbReference type="GO" id="GO:0005524">
    <property type="term" value="F:ATP binding"/>
    <property type="evidence" value="ECO:0007669"/>
    <property type="project" value="UniProtKB-UniRule"/>
</dbReference>
<dbReference type="GO" id="GO:0046872">
    <property type="term" value="F:metal ion binding"/>
    <property type="evidence" value="ECO:0007669"/>
    <property type="project" value="UniProtKB-KW"/>
</dbReference>
<dbReference type="GO" id="GO:0004829">
    <property type="term" value="F:threonine-tRNA ligase activity"/>
    <property type="evidence" value="ECO:0007669"/>
    <property type="project" value="UniProtKB-UniRule"/>
</dbReference>
<dbReference type="GO" id="GO:0000049">
    <property type="term" value="F:tRNA binding"/>
    <property type="evidence" value="ECO:0007669"/>
    <property type="project" value="UniProtKB-KW"/>
</dbReference>
<dbReference type="GO" id="GO:0006435">
    <property type="term" value="P:threonyl-tRNA aminoacylation"/>
    <property type="evidence" value="ECO:0007669"/>
    <property type="project" value="UniProtKB-UniRule"/>
</dbReference>
<dbReference type="CDD" id="cd01667">
    <property type="entry name" value="TGS_ThrRS"/>
    <property type="match status" value="1"/>
</dbReference>
<dbReference type="CDD" id="cd00860">
    <property type="entry name" value="ThrRS_anticodon"/>
    <property type="match status" value="1"/>
</dbReference>
<dbReference type="CDD" id="cd00771">
    <property type="entry name" value="ThrRS_core"/>
    <property type="match status" value="1"/>
</dbReference>
<dbReference type="FunFam" id="3.10.20.30:FF:000005">
    <property type="entry name" value="Threonine--tRNA ligase"/>
    <property type="match status" value="1"/>
</dbReference>
<dbReference type="FunFam" id="3.30.54.20:FF:000002">
    <property type="entry name" value="Threonine--tRNA ligase"/>
    <property type="match status" value="1"/>
</dbReference>
<dbReference type="FunFam" id="3.30.930.10:FF:000002">
    <property type="entry name" value="Threonine--tRNA ligase"/>
    <property type="match status" value="1"/>
</dbReference>
<dbReference type="FunFam" id="3.40.50.800:FF:000001">
    <property type="entry name" value="Threonine--tRNA ligase"/>
    <property type="match status" value="1"/>
</dbReference>
<dbReference type="FunFam" id="3.30.980.10:FF:000005">
    <property type="entry name" value="Threonyl-tRNA synthetase, mitochondrial"/>
    <property type="match status" value="1"/>
</dbReference>
<dbReference type="Gene3D" id="3.10.20.30">
    <property type="match status" value="1"/>
</dbReference>
<dbReference type="Gene3D" id="3.30.54.20">
    <property type="match status" value="1"/>
</dbReference>
<dbReference type="Gene3D" id="3.40.50.800">
    <property type="entry name" value="Anticodon-binding domain"/>
    <property type="match status" value="1"/>
</dbReference>
<dbReference type="Gene3D" id="3.30.930.10">
    <property type="entry name" value="Bira Bifunctional Protein, Domain 2"/>
    <property type="match status" value="1"/>
</dbReference>
<dbReference type="Gene3D" id="3.30.980.10">
    <property type="entry name" value="Threonyl-trna Synthetase, Chain A, domain 2"/>
    <property type="match status" value="1"/>
</dbReference>
<dbReference type="HAMAP" id="MF_00184">
    <property type="entry name" value="Thr_tRNA_synth"/>
    <property type="match status" value="1"/>
</dbReference>
<dbReference type="InterPro" id="IPR002314">
    <property type="entry name" value="aa-tRNA-synt_IIb"/>
</dbReference>
<dbReference type="InterPro" id="IPR006195">
    <property type="entry name" value="aa-tRNA-synth_II"/>
</dbReference>
<dbReference type="InterPro" id="IPR045864">
    <property type="entry name" value="aa-tRNA-synth_II/BPL/LPL"/>
</dbReference>
<dbReference type="InterPro" id="IPR004154">
    <property type="entry name" value="Anticodon-bd"/>
</dbReference>
<dbReference type="InterPro" id="IPR036621">
    <property type="entry name" value="Anticodon-bd_dom_sf"/>
</dbReference>
<dbReference type="InterPro" id="IPR012675">
    <property type="entry name" value="Beta-grasp_dom_sf"/>
</dbReference>
<dbReference type="InterPro" id="IPR004095">
    <property type="entry name" value="TGS"/>
</dbReference>
<dbReference type="InterPro" id="IPR012676">
    <property type="entry name" value="TGS-like"/>
</dbReference>
<dbReference type="InterPro" id="IPR002320">
    <property type="entry name" value="Thr-tRNA-ligase_IIa"/>
</dbReference>
<dbReference type="InterPro" id="IPR018163">
    <property type="entry name" value="Thr/Ala-tRNA-synth_IIc_edit"/>
</dbReference>
<dbReference type="InterPro" id="IPR047246">
    <property type="entry name" value="ThrRS_anticodon"/>
</dbReference>
<dbReference type="InterPro" id="IPR033728">
    <property type="entry name" value="ThrRS_core"/>
</dbReference>
<dbReference type="InterPro" id="IPR012947">
    <property type="entry name" value="tRNA_SAD"/>
</dbReference>
<dbReference type="NCBIfam" id="TIGR00418">
    <property type="entry name" value="thrS"/>
    <property type="match status" value="1"/>
</dbReference>
<dbReference type="PANTHER" id="PTHR11451:SF44">
    <property type="entry name" value="THREONINE--TRNA LIGASE, CHLOROPLASTIC_MITOCHONDRIAL 2"/>
    <property type="match status" value="1"/>
</dbReference>
<dbReference type="PANTHER" id="PTHR11451">
    <property type="entry name" value="THREONINE-TRNA LIGASE"/>
    <property type="match status" value="1"/>
</dbReference>
<dbReference type="Pfam" id="PF03129">
    <property type="entry name" value="HGTP_anticodon"/>
    <property type="match status" value="1"/>
</dbReference>
<dbReference type="Pfam" id="PF02824">
    <property type="entry name" value="TGS"/>
    <property type="match status" value="1"/>
</dbReference>
<dbReference type="Pfam" id="PF00587">
    <property type="entry name" value="tRNA-synt_2b"/>
    <property type="match status" value="1"/>
</dbReference>
<dbReference type="Pfam" id="PF07973">
    <property type="entry name" value="tRNA_SAD"/>
    <property type="match status" value="1"/>
</dbReference>
<dbReference type="PRINTS" id="PR01047">
    <property type="entry name" value="TRNASYNTHTHR"/>
</dbReference>
<dbReference type="SMART" id="SM00863">
    <property type="entry name" value="tRNA_SAD"/>
    <property type="match status" value="1"/>
</dbReference>
<dbReference type="SUPFAM" id="SSF52954">
    <property type="entry name" value="Class II aaRS ABD-related"/>
    <property type="match status" value="1"/>
</dbReference>
<dbReference type="SUPFAM" id="SSF55681">
    <property type="entry name" value="Class II aaRS and biotin synthetases"/>
    <property type="match status" value="1"/>
</dbReference>
<dbReference type="SUPFAM" id="SSF81271">
    <property type="entry name" value="TGS-like"/>
    <property type="match status" value="1"/>
</dbReference>
<dbReference type="SUPFAM" id="SSF55186">
    <property type="entry name" value="ThrRS/AlaRS common domain"/>
    <property type="match status" value="1"/>
</dbReference>
<dbReference type="PROSITE" id="PS50862">
    <property type="entry name" value="AA_TRNA_LIGASE_II"/>
    <property type="match status" value="1"/>
</dbReference>
<dbReference type="PROSITE" id="PS51880">
    <property type="entry name" value="TGS"/>
    <property type="match status" value="1"/>
</dbReference>
<keyword id="KW-0030">Aminoacyl-tRNA synthetase</keyword>
<keyword id="KW-0067">ATP-binding</keyword>
<keyword id="KW-0963">Cytoplasm</keyword>
<keyword id="KW-0436">Ligase</keyword>
<keyword id="KW-0479">Metal-binding</keyword>
<keyword id="KW-0547">Nucleotide-binding</keyword>
<keyword id="KW-0648">Protein biosynthesis</keyword>
<keyword id="KW-0694">RNA-binding</keyword>
<keyword id="KW-0820">tRNA-binding</keyword>
<keyword id="KW-0862">Zinc</keyword>
<accession>A5IAK9</accession>
<gene>
    <name evidence="1" type="primary">thrS</name>
    <name type="ordered locus">LPC_0420</name>
</gene>
<organism>
    <name type="scientific">Legionella pneumophila (strain Corby)</name>
    <dbReference type="NCBI Taxonomy" id="400673"/>
    <lineage>
        <taxon>Bacteria</taxon>
        <taxon>Pseudomonadati</taxon>
        <taxon>Pseudomonadota</taxon>
        <taxon>Gammaproteobacteria</taxon>
        <taxon>Legionellales</taxon>
        <taxon>Legionellaceae</taxon>
        <taxon>Legionella</taxon>
    </lineage>
</organism>
<sequence length="637" mass="72852">MPNVKLPDGNVKHFEAPLTIYDVAHHISPGLAKAAIAGRVDGVLVDTSYLIKEDCSLIIVTEKHEDSLEIIRHSTAHLLAQAVKALFPSAQVTIGPVIEDGFYYDFAFERSFTPDDLSLIEAKMHELAKANLSITRRELPRNEAIQYFKSLGEEYKAKIIADIPENEALSLYRQGDFEDLCRGPHVPSTGFLKAFKLTKVAGAYWRGDSNNEMLQRIYGTAWADKKSLEEYLFRLEEAEKRDHRKLGKALDLFHFQDIAPGMVFWHPKGWTIYQELEHYMRNRLVDFGYQEIRTPQLVDRSLWEKSGHWANFRDEMFVTETENRHYAVKPMSCPCHVQIYNHGLKSYRDLPLRLSEFGNCHRCEPSGALHGLMRVRNMVQDDAHIFCTEDQIQSEVAMMLELVQSVYKDFGFTEIKYRLALRPEKRVGSDDVWDKAETALKLAMQGRNIEWVDAPGEGAFYGPKIECSLSDCLGRIWQCGTIQVDFSMPARLEASYVAEDGSKQTPVMLHRAILGSFERFMGILIEHYAGKLPLWLSPVQAVVLTISEKQNEYAEKVRKTLQKRGIRANFDLRNEKIGFKIREHTLQKIPYLLVVGDKEVENCQVAVRTRDGIDLGVMTIDTICDTLTQEIIRKGSI</sequence>
<evidence type="ECO:0000255" key="1">
    <source>
        <dbReference type="HAMAP-Rule" id="MF_00184"/>
    </source>
</evidence>
<evidence type="ECO:0000255" key="2">
    <source>
        <dbReference type="PROSITE-ProRule" id="PRU01228"/>
    </source>
</evidence>
<reference key="1">
    <citation type="submission" date="2006-11" db="EMBL/GenBank/DDBJ databases">
        <title>Identification and characterization of a new conjugation/ type IVA secretion system (trb/tra) of L. pneumophila Corby localized on a mobile genomic island.</title>
        <authorList>
            <person name="Gloeckner G."/>
            <person name="Albert-Weissenberger C."/>
            <person name="Weinmann E."/>
            <person name="Jacobi S."/>
            <person name="Schunder E."/>
            <person name="Steinert M."/>
            <person name="Buchrieser C."/>
            <person name="Hacker J."/>
            <person name="Heuner K."/>
        </authorList>
    </citation>
    <scope>NUCLEOTIDE SEQUENCE [LARGE SCALE GENOMIC DNA]</scope>
    <source>
        <strain>Corby</strain>
    </source>
</reference>
<protein>
    <recommendedName>
        <fullName evidence="1">Threonine--tRNA ligase</fullName>
        <ecNumber evidence="1">6.1.1.3</ecNumber>
    </recommendedName>
    <alternativeName>
        <fullName evidence="1">Threonyl-tRNA synthetase</fullName>
        <shortName evidence="1">ThrRS</shortName>
    </alternativeName>
</protein>